<organism>
    <name type="scientific">Helicobacter pylori (strain P12)</name>
    <dbReference type="NCBI Taxonomy" id="570508"/>
    <lineage>
        <taxon>Bacteria</taxon>
        <taxon>Pseudomonadati</taxon>
        <taxon>Campylobacterota</taxon>
        <taxon>Epsilonproteobacteria</taxon>
        <taxon>Campylobacterales</taxon>
        <taxon>Helicobacteraceae</taxon>
        <taxon>Helicobacter</taxon>
    </lineage>
</organism>
<keyword id="KW-0143">Chaperone</keyword>
<keyword id="KW-0963">Cytoplasm</keyword>
<keyword id="KW-0996">Nickel insertion</keyword>
<dbReference type="EMBL" id="CP001217">
    <property type="protein sequence ID" value="ACJ07233.1"/>
    <property type="molecule type" value="Genomic_DNA"/>
</dbReference>
<dbReference type="SMR" id="B6JPH2"/>
<dbReference type="KEGG" id="hpp:HPP12_0073"/>
<dbReference type="HOGENOM" id="CLU_049215_4_2_7"/>
<dbReference type="Proteomes" id="UP000008198">
    <property type="component" value="Chromosome"/>
</dbReference>
<dbReference type="GO" id="GO:0005737">
    <property type="term" value="C:cytoplasm"/>
    <property type="evidence" value="ECO:0007669"/>
    <property type="project" value="UniProtKB-SubCell"/>
</dbReference>
<dbReference type="GO" id="GO:0016151">
    <property type="term" value="F:nickel cation binding"/>
    <property type="evidence" value="ECO:0007669"/>
    <property type="project" value="UniProtKB-UniRule"/>
</dbReference>
<dbReference type="FunFam" id="1.10.4190.10:FF:000002">
    <property type="entry name" value="Urease accessory protein UreF"/>
    <property type="match status" value="1"/>
</dbReference>
<dbReference type="Gene3D" id="1.10.4190.10">
    <property type="entry name" value="Urease accessory protein UreF"/>
    <property type="match status" value="1"/>
</dbReference>
<dbReference type="HAMAP" id="MF_01385">
    <property type="entry name" value="UreF"/>
    <property type="match status" value="1"/>
</dbReference>
<dbReference type="InterPro" id="IPR002639">
    <property type="entry name" value="UreF"/>
</dbReference>
<dbReference type="InterPro" id="IPR038277">
    <property type="entry name" value="UreF_sf"/>
</dbReference>
<dbReference type="PANTHER" id="PTHR33620">
    <property type="entry name" value="UREASE ACCESSORY PROTEIN F"/>
    <property type="match status" value="1"/>
</dbReference>
<dbReference type="PANTHER" id="PTHR33620:SF1">
    <property type="entry name" value="UREASE ACCESSORY PROTEIN F"/>
    <property type="match status" value="1"/>
</dbReference>
<dbReference type="Pfam" id="PF01730">
    <property type="entry name" value="UreF"/>
    <property type="match status" value="1"/>
</dbReference>
<dbReference type="PIRSF" id="PIRSF009467">
    <property type="entry name" value="Ureas_acces_UreF"/>
    <property type="match status" value="1"/>
</dbReference>
<feature type="chain" id="PRO_1000145118" description="Urease accessory protein UreF">
    <location>
        <begin position="1"/>
        <end position="254"/>
    </location>
</feature>
<feature type="region of interest" description="Disordered" evidence="2">
    <location>
        <begin position="1"/>
        <end position="25"/>
    </location>
</feature>
<feature type="compositionally biased region" description="Basic and acidic residues" evidence="2">
    <location>
        <begin position="1"/>
        <end position="11"/>
    </location>
</feature>
<reference key="1">
    <citation type="submission" date="2008-10" db="EMBL/GenBank/DDBJ databases">
        <title>The complete genome sequence of Helicobacter pylori strain P12.</title>
        <authorList>
            <person name="Fischer W."/>
            <person name="Windhager L."/>
            <person name="Karnholz A."/>
            <person name="Zeiller M."/>
            <person name="Zimmer R."/>
            <person name="Haas R."/>
        </authorList>
    </citation>
    <scope>NUCLEOTIDE SEQUENCE [LARGE SCALE GENOMIC DNA]</scope>
    <source>
        <strain>P12</strain>
    </source>
</reference>
<protein>
    <recommendedName>
        <fullName evidence="1">Urease accessory protein UreF</fullName>
    </recommendedName>
</protein>
<proteinExistence type="inferred from homology"/>
<comment type="function">
    <text evidence="1">Required for maturation of urease via the functional incorporation of the urease nickel metallocenter.</text>
</comment>
<comment type="subunit">
    <text evidence="1">UreH, UreF and UreG form a complex that acts as a GTP-hydrolysis-dependent molecular chaperone, activating the urease apoprotein by helping to assemble the nickel containing metallocenter of UreC. The UreE protein probably delivers the nickel.</text>
</comment>
<comment type="subcellular location">
    <subcellularLocation>
        <location evidence="1">Cytoplasm</location>
    </subcellularLocation>
</comment>
<comment type="similarity">
    <text evidence="1">Belongs to the UreF family.</text>
</comment>
<gene>
    <name evidence="1" type="primary">ureF</name>
    <name type="ordered locus">HPP12_0073</name>
</gene>
<accession>B6JPH2</accession>
<name>UREF_HELP2</name>
<evidence type="ECO:0000255" key="1">
    <source>
        <dbReference type="HAMAP-Rule" id="MF_01385"/>
    </source>
</evidence>
<evidence type="ECO:0000256" key="2">
    <source>
        <dbReference type="SAM" id="MobiDB-lite"/>
    </source>
</evidence>
<sequence>MDKGKSVKSTEKSVGIPPKTPKTDNNAHVDNEFLILQVNDAVFPIGSYTHSFGLETYIQQKKVTNKESALEYLKANLSSQFLYTEMLSLKLTYESTLQQNLKKILGVEEVIMLSTSPMELRLANQKLGNRFIKTLQAMNELDMGAFFNAYAQQTKDPTHATSYGVFAASLNMELKKALRHYLYAQTSNMVINCVKSVPLSQNDGQKILLSLQSPFNQLIEKTLELDESHLCAASVQNDIKAMQHESLYSRLYMS</sequence>